<name>TPC13_MOUSE</name>
<organism>
    <name type="scientific">Mus musculus</name>
    <name type="common">Mouse</name>
    <dbReference type="NCBI Taxonomy" id="10090"/>
    <lineage>
        <taxon>Eukaryota</taxon>
        <taxon>Metazoa</taxon>
        <taxon>Chordata</taxon>
        <taxon>Craniata</taxon>
        <taxon>Vertebrata</taxon>
        <taxon>Euteleostomi</taxon>
        <taxon>Mammalia</taxon>
        <taxon>Eutheria</taxon>
        <taxon>Euarchontoglires</taxon>
        <taxon>Glires</taxon>
        <taxon>Rodentia</taxon>
        <taxon>Myomorpha</taxon>
        <taxon>Muroidea</taxon>
        <taxon>Muridae</taxon>
        <taxon>Murinae</taxon>
        <taxon>Mus</taxon>
        <taxon>Mus</taxon>
    </lineage>
</organism>
<protein>
    <recommendedName>
        <fullName>Trafficking protein particle complex subunit 13</fullName>
    </recommendedName>
</protein>
<dbReference type="EMBL" id="AK010346">
    <property type="protein sequence ID" value="BAB26869.2"/>
    <property type="status" value="ALT_INIT"/>
    <property type="molecule type" value="mRNA"/>
</dbReference>
<dbReference type="EMBL" id="AK013956">
    <property type="protein sequence ID" value="BAB29083.2"/>
    <property type="status" value="ALT_INIT"/>
    <property type="molecule type" value="mRNA"/>
</dbReference>
<dbReference type="EMBL" id="AK084373">
    <property type="protein sequence ID" value="BAC39168.1"/>
    <property type="status" value="ALT_INIT"/>
    <property type="molecule type" value="mRNA"/>
</dbReference>
<dbReference type="EMBL" id="AK149832">
    <property type="protein sequence ID" value="BAE29111.1"/>
    <property type="molecule type" value="mRNA"/>
</dbReference>
<dbReference type="EMBL" id="AK163342">
    <property type="protein sequence ID" value="BAE37309.1"/>
    <property type="molecule type" value="mRNA"/>
</dbReference>
<dbReference type="EMBL" id="AK167749">
    <property type="protein sequence ID" value="BAE39785.1"/>
    <property type="molecule type" value="mRNA"/>
</dbReference>
<dbReference type="EMBL" id="BC021756">
    <property type="protein sequence ID" value="AAH21756.3"/>
    <property type="molecule type" value="mRNA"/>
</dbReference>
<dbReference type="CCDS" id="CCDS49351.1">
    <molecule id="Q3TIR1-3"/>
</dbReference>
<dbReference type="CCDS" id="CCDS49352.1">
    <molecule id="Q3TIR1-1"/>
</dbReference>
<dbReference type="CCDS" id="CCDS49353.1">
    <molecule id="Q3TIR1-2"/>
</dbReference>
<dbReference type="RefSeq" id="NP_001087228.1">
    <molecule id="Q3TIR1-1"/>
    <property type="nucleotide sequence ID" value="NM_001093759.1"/>
</dbReference>
<dbReference type="RefSeq" id="NP_001087229.1">
    <molecule id="Q3TIR1-3"/>
    <property type="nucleotide sequence ID" value="NM_001093760.1"/>
</dbReference>
<dbReference type="RefSeq" id="NP_080155.3">
    <molecule id="Q3TIR1-2"/>
    <property type="nucleotide sequence ID" value="NM_025879.2"/>
</dbReference>
<dbReference type="ComplexPortal" id="CPX-4764">
    <property type="entry name" value="TRAPP II complex"/>
</dbReference>
<dbReference type="FunCoup" id="Q3TIR1">
    <property type="interactions" value="2365"/>
</dbReference>
<dbReference type="STRING" id="10090.ENSMUSP00000022224"/>
<dbReference type="GlyGen" id="Q3TIR1">
    <property type="glycosylation" value="1 site, 1 N-linked glycan (1 site)"/>
</dbReference>
<dbReference type="iPTMnet" id="Q3TIR1"/>
<dbReference type="PhosphoSitePlus" id="Q3TIR1"/>
<dbReference type="PaxDb" id="10090-ENSMUSP00000022224"/>
<dbReference type="ProteomicsDB" id="258822">
    <molecule id="Q3TIR1-1"/>
</dbReference>
<dbReference type="ProteomicsDB" id="258823">
    <molecule id="Q3TIR1-2"/>
</dbReference>
<dbReference type="ProteomicsDB" id="258824">
    <molecule id="Q3TIR1-3"/>
</dbReference>
<dbReference type="Pumba" id="Q3TIR1"/>
<dbReference type="Antibodypedia" id="43978">
    <property type="antibodies" value="44 antibodies from 16 providers"/>
</dbReference>
<dbReference type="DNASU" id="66975"/>
<dbReference type="Ensembl" id="ENSMUST00000022224.16">
    <molecule id="Q3TIR1-2"/>
    <property type="protein sequence ID" value="ENSMUSP00000022224.10"/>
    <property type="gene ID" value="ENSMUSG00000021711.18"/>
</dbReference>
<dbReference type="Ensembl" id="ENSMUST00000141557.8">
    <molecule id="Q3TIR1-1"/>
    <property type="protein sequence ID" value="ENSMUSP00000118316.2"/>
    <property type="gene ID" value="ENSMUSG00000021711.18"/>
</dbReference>
<dbReference type="Ensembl" id="ENSMUST00000144060.8">
    <molecule id="Q3TIR1-3"/>
    <property type="protein sequence ID" value="ENSMUSP00000114406.2"/>
    <property type="gene ID" value="ENSMUSG00000021711.18"/>
</dbReference>
<dbReference type="GeneID" id="66975"/>
<dbReference type="KEGG" id="mmu:66975"/>
<dbReference type="UCSC" id="uc007rst.1">
    <molecule id="Q3TIR1-1"/>
    <property type="organism name" value="mouse"/>
</dbReference>
<dbReference type="UCSC" id="uc007rsu.1">
    <molecule id="Q3TIR1-2"/>
    <property type="organism name" value="mouse"/>
</dbReference>
<dbReference type="UCSC" id="uc007rsv.1">
    <molecule id="Q3TIR1-3"/>
    <property type="organism name" value="mouse"/>
</dbReference>
<dbReference type="AGR" id="MGI:1914225"/>
<dbReference type="CTD" id="80006"/>
<dbReference type="MGI" id="MGI:1914225">
    <property type="gene designation" value="Trappc13"/>
</dbReference>
<dbReference type="VEuPathDB" id="HostDB:ENSMUSG00000021711"/>
<dbReference type="eggNOG" id="KOG2625">
    <property type="taxonomic scope" value="Eukaryota"/>
</dbReference>
<dbReference type="GeneTree" id="ENSGT00390000015280"/>
<dbReference type="HOGENOM" id="CLU_027041_0_0_1"/>
<dbReference type="InParanoid" id="Q3TIR1"/>
<dbReference type="OMA" id="YLCVHNG"/>
<dbReference type="OrthoDB" id="33989at9989"/>
<dbReference type="PhylomeDB" id="Q3TIR1"/>
<dbReference type="TreeFam" id="TF314898"/>
<dbReference type="Reactome" id="R-MMU-8876198">
    <property type="pathway name" value="RAB GEFs exchange GTP for GDP on RABs"/>
</dbReference>
<dbReference type="BioGRID-ORCS" id="66975">
    <property type="hits" value="8 hits in 76 CRISPR screens"/>
</dbReference>
<dbReference type="ChiTaRS" id="Trappc13">
    <property type="organism name" value="mouse"/>
</dbReference>
<dbReference type="PRO" id="PR:Q3TIR1"/>
<dbReference type="Proteomes" id="UP000000589">
    <property type="component" value="Chromosome 13"/>
</dbReference>
<dbReference type="RNAct" id="Q3TIR1">
    <property type="molecule type" value="protein"/>
</dbReference>
<dbReference type="Bgee" id="ENSMUSG00000021711">
    <property type="expression patterns" value="Expressed in substantia nigra and 243 other cell types or tissues"/>
</dbReference>
<dbReference type="ExpressionAtlas" id="Q3TIR1">
    <property type="expression patterns" value="baseline and differential"/>
</dbReference>
<dbReference type="GO" id="GO:0005737">
    <property type="term" value="C:cytoplasm"/>
    <property type="evidence" value="ECO:0000303"/>
    <property type="project" value="ComplexPortal"/>
</dbReference>
<dbReference type="GO" id="GO:1990071">
    <property type="term" value="C:TRAPPII protein complex"/>
    <property type="evidence" value="ECO:0000303"/>
    <property type="project" value="ComplexPortal"/>
</dbReference>
<dbReference type="GO" id="GO:0006888">
    <property type="term" value="P:endoplasmic reticulum to Golgi vesicle-mediated transport"/>
    <property type="evidence" value="ECO:0000303"/>
    <property type="project" value="ComplexPortal"/>
</dbReference>
<dbReference type="GO" id="GO:0006901">
    <property type="term" value="P:vesicle coating"/>
    <property type="evidence" value="ECO:0000303"/>
    <property type="project" value="ComplexPortal"/>
</dbReference>
<dbReference type="GO" id="GO:0099022">
    <property type="term" value="P:vesicle tethering"/>
    <property type="evidence" value="ECO:0000303"/>
    <property type="project" value="ComplexPortal"/>
</dbReference>
<dbReference type="InterPro" id="IPR010378">
    <property type="entry name" value="TRAPPC13"/>
</dbReference>
<dbReference type="InterPro" id="IPR055428">
    <property type="entry name" value="TRAPPC13_C"/>
</dbReference>
<dbReference type="InterPro" id="IPR055429">
    <property type="entry name" value="TRAPPC13_M"/>
</dbReference>
<dbReference type="InterPro" id="IPR055427">
    <property type="entry name" value="TRAPPC13_N"/>
</dbReference>
<dbReference type="PANTHER" id="PTHR13134">
    <property type="entry name" value="TRAFFICKING PROTEIN PARTICLE COMPLEX SUBUNIT 13"/>
    <property type="match status" value="1"/>
</dbReference>
<dbReference type="PANTHER" id="PTHR13134:SF3">
    <property type="entry name" value="TRAFFICKING PROTEIN PARTICLE COMPLEX SUBUNIT 13"/>
    <property type="match status" value="1"/>
</dbReference>
<dbReference type="Pfam" id="PF23643">
    <property type="entry name" value="TRAPPC13_C"/>
    <property type="match status" value="1"/>
</dbReference>
<dbReference type="Pfam" id="PF23647">
    <property type="entry name" value="TRAPPC13_M"/>
    <property type="match status" value="1"/>
</dbReference>
<dbReference type="Pfam" id="PF06159">
    <property type="entry name" value="TRAPPC13_N"/>
    <property type="match status" value="1"/>
</dbReference>
<comment type="subunit">
    <text evidence="1">Part of the multisubunit TRAPP (transport protein particle) complex.</text>
</comment>
<comment type="alternative products">
    <event type="alternative splicing"/>
    <isoform>
        <id>Q3TIR1-1</id>
        <name>1</name>
        <sequence type="displayed"/>
    </isoform>
    <isoform>
        <id>Q3TIR1-2</id>
        <name>2</name>
        <sequence type="described" ref="VSP_031800"/>
    </isoform>
    <isoform>
        <id>Q3TIR1-3</id>
        <name>3</name>
        <sequence type="described" ref="VSP_031799 VSP_031800"/>
    </isoform>
</comment>
<comment type="similarity">
    <text evidence="4">Belongs to the TRAPPC13 family.</text>
</comment>
<comment type="sequence caution" evidence="4">
    <conflict type="erroneous initiation">
        <sequence resource="EMBL-CDS" id="BAB26869"/>
    </conflict>
    <text>Truncated N-terminus.</text>
</comment>
<comment type="sequence caution" evidence="4">
    <conflict type="erroneous initiation">
        <sequence resource="EMBL-CDS" id="BAB29083"/>
    </conflict>
    <text>Truncated N-terminus.</text>
</comment>
<comment type="sequence caution" evidence="4">
    <conflict type="erroneous initiation">
        <sequence resource="EMBL-CDS" id="BAC39168"/>
    </conflict>
    <text>Truncated N-terminus.</text>
</comment>
<reference key="1">
    <citation type="journal article" date="2005" name="Science">
        <title>The transcriptional landscape of the mammalian genome.</title>
        <authorList>
            <person name="Carninci P."/>
            <person name="Kasukawa T."/>
            <person name="Katayama S."/>
            <person name="Gough J."/>
            <person name="Frith M.C."/>
            <person name="Maeda N."/>
            <person name="Oyama R."/>
            <person name="Ravasi T."/>
            <person name="Lenhard B."/>
            <person name="Wells C."/>
            <person name="Kodzius R."/>
            <person name="Shimokawa K."/>
            <person name="Bajic V.B."/>
            <person name="Brenner S.E."/>
            <person name="Batalov S."/>
            <person name="Forrest A.R."/>
            <person name="Zavolan M."/>
            <person name="Davis M.J."/>
            <person name="Wilming L.G."/>
            <person name="Aidinis V."/>
            <person name="Allen J.E."/>
            <person name="Ambesi-Impiombato A."/>
            <person name="Apweiler R."/>
            <person name="Aturaliya R.N."/>
            <person name="Bailey T.L."/>
            <person name="Bansal M."/>
            <person name="Baxter L."/>
            <person name="Beisel K.W."/>
            <person name="Bersano T."/>
            <person name="Bono H."/>
            <person name="Chalk A.M."/>
            <person name="Chiu K.P."/>
            <person name="Choudhary V."/>
            <person name="Christoffels A."/>
            <person name="Clutterbuck D.R."/>
            <person name="Crowe M.L."/>
            <person name="Dalla E."/>
            <person name="Dalrymple B.P."/>
            <person name="de Bono B."/>
            <person name="Della Gatta G."/>
            <person name="di Bernardo D."/>
            <person name="Down T."/>
            <person name="Engstrom P."/>
            <person name="Fagiolini M."/>
            <person name="Faulkner G."/>
            <person name="Fletcher C.F."/>
            <person name="Fukushima T."/>
            <person name="Furuno M."/>
            <person name="Futaki S."/>
            <person name="Gariboldi M."/>
            <person name="Georgii-Hemming P."/>
            <person name="Gingeras T.R."/>
            <person name="Gojobori T."/>
            <person name="Green R.E."/>
            <person name="Gustincich S."/>
            <person name="Harbers M."/>
            <person name="Hayashi Y."/>
            <person name="Hensch T.K."/>
            <person name="Hirokawa N."/>
            <person name="Hill D."/>
            <person name="Huminiecki L."/>
            <person name="Iacono M."/>
            <person name="Ikeo K."/>
            <person name="Iwama A."/>
            <person name="Ishikawa T."/>
            <person name="Jakt M."/>
            <person name="Kanapin A."/>
            <person name="Katoh M."/>
            <person name="Kawasawa Y."/>
            <person name="Kelso J."/>
            <person name="Kitamura H."/>
            <person name="Kitano H."/>
            <person name="Kollias G."/>
            <person name="Krishnan S.P."/>
            <person name="Kruger A."/>
            <person name="Kummerfeld S.K."/>
            <person name="Kurochkin I.V."/>
            <person name="Lareau L.F."/>
            <person name="Lazarevic D."/>
            <person name="Lipovich L."/>
            <person name="Liu J."/>
            <person name="Liuni S."/>
            <person name="McWilliam S."/>
            <person name="Madan Babu M."/>
            <person name="Madera M."/>
            <person name="Marchionni L."/>
            <person name="Matsuda H."/>
            <person name="Matsuzawa S."/>
            <person name="Miki H."/>
            <person name="Mignone F."/>
            <person name="Miyake S."/>
            <person name="Morris K."/>
            <person name="Mottagui-Tabar S."/>
            <person name="Mulder N."/>
            <person name="Nakano N."/>
            <person name="Nakauchi H."/>
            <person name="Ng P."/>
            <person name="Nilsson R."/>
            <person name="Nishiguchi S."/>
            <person name="Nishikawa S."/>
            <person name="Nori F."/>
            <person name="Ohara O."/>
            <person name="Okazaki Y."/>
            <person name="Orlando V."/>
            <person name="Pang K.C."/>
            <person name="Pavan W.J."/>
            <person name="Pavesi G."/>
            <person name="Pesole G."/>
            <person name="Petrovsky N."/>
            <person name="Piazza S."/>
            <person name="Reed J."/>
            <person name="Reid J.F."/>
            <person name="Ring B.Z."/>
            <person name="Ringwald M."/>
            <person name="Rost B."/>
            <person name="Ruan Y."/>
            <person name="Salzberg S.L."/>
            <person name="Sandelin A."/>
            <person name="Schneider C."/>
            <person name="Schoenbach C."/>
            <person name="Sekiguchi K."/>
            <person name="Semple C.A."/>
            <person name="Seno S."/>
            <person name="Sessa L."/>
            <person name="Sheng Y."/>
            <person name="Shibata Y."/>
            <person name="Shimada H."/>
            <person name="Shimada K."/>
            <person name="Silva D."/>
            <person name="Sinclair B."/>
            <person name="Sperling S."/>
            <person name="Stupka E."/>
            <person name="Sugiura K."/>
            <person name="Sultana R."/>
            <person name="Takenaka Y."/>
            <person name="Taki K."/>
            <person name="Tammoja K."/>
            <person name="Tan S.L."/>
            <person name="Tang S."/>
            <person name="Taylor M.S."/>
            <person name="Tegner J."/>
            <person name="Teichmann S.A."/>
            <person name="Ueda H.R."/>
            <person name="van Nimwegen E."/>
            <person name="Verardo R."/>
            <person name="Wei C.L."/>
            <person name="Yagi K."/>
            <person name="Yamanishi H."/>
            <person name="Zabarovsky E."/>
            <person name="Zhu S."/>
            <person name="Zimmer A."/>
            <person name="Hide W."/>
            <person name="Bult C."/>
            <person name="Grimmond S.M."/>
            <person name="Teasdale R.D."/>
            <person name="Liu E.T."/>
            <person name="Brusic V."/>
            <person name="Quackenbush J."/>
            <person name="Wahlestedt C."/>
            <person name="Mattick J.S."/>
            <person name="Hume D.A."/>
            <person name="Kai C."/>
            <person name="Sasaki D."/>
            <person name="Tomaru Y."/>
            <person name="Fukuda S."/>
            <person name="Kanamori-Katayama M."/>
            <person name="Suzuki M."/>
            <person name="Aoki J."/>
            <person name="Arakawa T."/>
            <person name="Iida J."/>
            <person name="Imamura K."/>
            <person name="Itoh M."/>
            <person name="Kato T."/>
            <person name="Kawaji H."/>
            <person name="Kawagashira N."/>
            <person name="Kawashima T."/>
            <person name="Kojima M."/>
            <person name="Kondo S."/>
            <person name="Konno H."/>
            <person name="Nakano K."/>
            <person name="Ninomiya N."/>
            <person name="Nishio T."/>
            <person name="Okada M."/>
            <person name="Plessy C."/>
            <person name="Shibata K."/>
            <person name="Shiraki T."/>
            <person name="Suzuki S."/>
            <person name="Tagami M."/>
            <person name="Waki K."/>
            <person name="Watahiki A."/>
            <person name="Okamura-Oho Y."/>
            <person name="Suzuki H."/>
            <person name="Kawai J."/>
            <person name="Hayashizaki Y."/>
        </authorList>
    </citation>
    <scope>NUCLEOTIDE SEQUENCE [LARGE SCALE MRNA] (ISOFORMS 1; 2 AND 3)</scope>
    <source>
        <strain>C57BL/6J</strain>
        <strain>DBA/2J</strain>
        <tissue>Bone marrow</tissue>
        <tissue>Egg</tissue>
        <tissue>Eye</tissue>
        <tissue>Head</tissue>
    </source>
</reference>
<reference key="2">
    <citation type="journal article" date="2004" name="Genome Res.">
        <title>The status, quality, and expansion of the NIH full-length cDNA project: the Mammalian Gene Collection (MGC).</title>
        <authorList>
            <consortium name="The MGC Project Team"/>
        </authorList>
    </citation>
    <scope>NUCLEOTIDE SEQUENCE [LARGE SCALE MRNA] (ISOFORM 2)</scope>
    <source>
        <strain>FVB/N</strain>
        <tissue>Mammary tumor</tissue>
    </source>
</reference>
<proteinExistence type="evidence at transcript level"/>
<keyword id="KW-0025">Alternative splicing</keyword>
<keyword id="KW-1185">Reference proteome</keyword>
<sequence>MEVNPPKQEHLLALKVMRLTKPTLFTNIPVTCEEKDLPGDLFNQLMKDDPSTVNGAEILMLGEMLTLPQNFGNIFLGETFSSYISVHNDSNQVVKDILVKADLQTSSQRLNLSASNAAVAELKPDCCIDDVIHHEVKEIGTHILVCAVSYTTQGGEKMYFRKFFKFQVLKPLDVKTKFYNAESDLSSVTDEVFLEAQIQNITTSPMFMEKVSLEPSIMYNVTELNSVTQAGECISTFGSRGYLQPMDTRQYLYCLKPKKEFAEKAGIIKGVTVIGKLDIVWKTNLGERGRLQTSQLQRMAPGYGDVRLSLEAIPDTVNLEEPFHITCKITNCSERMMDLVLEMCNTNSIHWCGISGRQLGKLHPSSSLCLALTLLSSVQGLQSVSGLRLTDTFLKRTYEYDDIAQVCVVSAAVEVEA</sequence>
<evidence type="ECO:0000250" key="1"/>
<evidence type="ECO:0000303" key="2">
    <source>
    </source>
</evidence>
<evidence type="ECO:0000303" key="3">
    <source>
    </source>
</evidence>
<evidence type="ECO:0000305" key="4"/>
<gene>
    <name type="primary">Trappc13</name>
</gene>
<feature type="chain" id="PRO_0000321548" description="Trafficking protein particle complex subunit 13">
    <location>
        <begin position="1"/>
        <end position="417"/>
    </location>
</feature>
<feature type="splice variant" id="VSP_031799" description="In isoform 3." evidence="3">
    <location>
        <begin position="183"/>
        <end position="188"/>
    </location>
</feature>
<feature type="splice variant" id="VSP_031800" description="In isoform 2 and isoform 3." evidence="2 3">
    <original>C</original>
    <variation>CS</variation>
    <location>
        <position position="332"/>
    </location>
</feature>
<feature type="sequence conflict" description="In Ref. 1; BAE29111." evidence="4" ref="1">
    <original>E</original>
    <variation>K</variation>
    <location>
        <position position="34"/>
    </location>
</feature>
<feature type="sequence conflict" description="In Ref. 1; BAB29083." evidence="4" ref="1">
    <original>L</original>
    <variation>V</variation>
    <location>
        <position position="291"/>
    </location>
</feature>
<feature type="sequence conflict" description="In Ref. 1; BAB29083." evidence="4" ref="1">
    <original>S</original>
    <variation>N</variation>
    <location>
        <position position="294"/>
    </location>
</feature>
<accession>Q3TIR1</accession>
<accession>Q3TQS3</accession>
<accession>Q3UE00</accession>
<accession>Q8BN93</accession>
<accession>Q8VDJ6</accession>
<accession>Q9CWW3</accession>
<accession>Q9CXV2</accession>